<comment type="function">
    <text evidence="1 2">Catalyzes the attachment of tryptophan to tRNA(Trp).</text>
</comment>
<comment type="catalytic activity">
    <reaction evidence="1 2">
        <text>tRNA(Trp) + L-tryptophan + ATP = L-tryptophyl-tRNA(Trp) + AMP + diphosphate + H(+)</text>
        <dbReference type="Rhea" id="RHEA:24080"/>
        <dbReference type="Rhea" id="RHEA-COMP:9671"/>
        <dbReference type="Rhea" id="RHEA-COMP:9705"/>
        <dbReference type="ChEBI" id="CHEBI:15378"/>
        <dbReference type="ChEBI" id="CHEBI:30616"/>
        <dbReference type="ChEBI" id="CHEBI:33019"/>
        <dbReference type="ChEBI" id="CHEBI:57912"/>
        <dbReference type="ChEBI" id="CHEBI:78442"/>
        <dbReference type="ChEBI" id="CHEBI:78535"/>
        <dbReference type="ChEBI" id="CHEBI:456215"/>
        <dbReference type="EC" id="6.1.1.2"/>
    </reaction>
</comment>
<comment type="activity regulation">
    <text evidence="2">Inhibited by indolmycin, a competitive inhibitor for tryptophan.</text>
</comment>
<comment type="biophysicochemical properties">
    <kinetics>
        <KM evidence="2">3 uM for tryptophan</KM>
    </kinetics>
</comment>
<comment type="subunit">
    <text evidence="1">Homodimer.</text>
</comment>
<comment type="subcellular location">
    <subcellularLocation>
        <location evidence="1">Cytoplasm</location>
    </subcellularLocation>
</comment>
<comment type="similarity">
    <text evidence="1">Belongs to the class-I aminoacyl-tRNA synthetase family.</text>
</comment>
<gene>
    <name evidence="1" type="primary">trpS</name>
</gene>
<evidence type="ECO:0000255" key="1">
    <source>
        <dbReference type="HAMAP-Rule" id="MF_00140"/>
    </source>
</evidence>
<evidence type="ECO:0000269" key="2">
    <source>
    </source>
</evidence>
<evidence type="ECO:0000305" key="3"/>
<evidence type="ECO:0007744" key="4">
    <source>
        <dbReference type="PDB" id="5DK4"/>
    </source>
</evidence>
<evidence type="ECO:0007829" key="5">
    <source>
        <dbReference type="PDB" id="1I6K"/>
    </source>
</evidence>
<evidence type="ECO:0007829" key="6">
    <source>
        <dbReference type="PDB" id="5DK4"/>
    </source>
</evidence>
<evidence type="ECO:0007829" key="7">
    <source>
        <dbReference type="PDB" id="7CMS"/>
    </source>
</evidence>
<dbReference type="EC" id="6.1.1.2" evidence="1 2"/>
<dbReference type="EMBL" id="M14742">
    <property type="protein sequence ID" value="AAA22873.1"/>
    <property type="molecule type" value="Genomic_DNA"/>
</dbReference>
<dbReference type="PIR" id="A26055">
    <property type="entry name" value="YWBSF"/>
</dbReference>
<dbReference type="PDB" id="1D2R">
    <property type="method" value="X-ray"/>
    <property type="resolution" value="2.90 A"/>
    <property type="chains" value="A/B/C/D/E/F=1-326"/>
</dbReference>
<dbReference type="PDB" id="1I6K">
    <property type="method" value="X-ray"/>
    <property type="resolution" value="1.72 A"/>
    <property type="chains" value="A=1-328"/>
</dbReference>
<dbReference type="PDB" id="1I6L">
    <property type="method" value="X-ray"/>
    <property type="resolution" value="1.72 A"/>
    <property type="chains" value="A=1-328"/>
</dbReference>
<dbReference type="PDB" id="1I6M">
    <property type="method" value="X-ray"/>
    <property type="resolution" value="1.72 A"/>
    <property type="chains" value="A=1-328"/>
</dbReference>
<dbReference type="PDB" id="1M83">
    <property type="method" value="X-ray"/>
    <property type="resolution" value="2.20 A"/>
    <property type="chains" value="A=1-328"/>
</dbReference>
<dbReference type="PDB" id="1MAU">
    <property type="method" value="X-ray"/>
    <property type="resolution" value="2.15 A"/>
    <property type="chains" value="A=1-328"/>
</dbReference>
<dbReference type="PDB" id="1MAW">
    <property type="method" value="X-ray"/>
    <property type="resolution" value="3.00 A"/>
    <property type="chains" value="A/B/C/D/E/F=1-328"/>
</dbReference>
<dbReference type="PDB" id="1MB2">
    <property type="method" value="X-ray"/>
    <property type="resolution" value="2.70 A"/>
    <property type="chains" value="A/B/C/D/E/F=1-328"/>
</dbReference>
<dbReference type="PDB" id="2OV4">
    <property type="method" value="X-ray"/>
    <property type="resolution" value="2.50 A"/>
    <property type="chains" value="A=1-328"/>
</dbReference>
<dbReference type="PDB" id="3FHJ">
    <property type="method" value="X-ray"/>
    <property type="resolution" value="2.65 A"/>
    <property type="chains" value="A/B/C/D/E/F=1-326"/>
</dbReference>
<dbReference type="PDB" id="3FI0">
    <property type="method" value="X-ray"/>
    <property type="resolution" value="2.70 A"/>
    <property type="chains" value="A/B/C/D/E/F/G/H/I/J/K/L/M/N/O/P/Q/R=1-326"/>
</dbReference>
<dbReference type="PDB" id="5DK4">
    <property type="method" value="X-ray"/>
    <property type="resolution" value="1.90 A"/>
    <property type="chains" value="A=2-328"/>
</dbReference>
<dbReference type="PDB" id="7CKI">
    <property type="method" value="X-ray"/>
    <property type="resolution" value="2.30 A"/>
    <property type="chains" value="A=1-328"/>
</dbReference>
<dbReference type="PDB" id="7CMS">
    <property type="method" value="X-ray"/>
    <property type="resolution" value="2.20 A"/>
    <property type="chains" value="A/B=1-328"/>
</dbReference>
<dbReference type="PDB" id="7EER">
    <property type="method" value="X-ray"/>
    <property type="resolution" value="2.00 A"/>
    <property type="chains" value="A/B/C/D=1-328"/>
</dbReference>
<dbReference type="PDBsum" id="1D2R"/>
<dbReference type="PDBsum" id="1I6K"/>
<dbReference type="PDBsum" id="1I6L"/>
<dbReference type="PDBsum" id="1I6M"/>
<dbReference type="PDBsum" id="1M83"/>
<dbReference type="PDBsum" id="1MAU"/>
<dbReference type="PDBsum" id="1MAW"/>
<dbReference type="PDBsum" id="1MB2"/>
<dbReference type="PDBsum" id="2OV4"/>
<dbReference type="PDBsum" id="3FHJ"/>
<dbReference type="PDBsum" id="3FI0"/>
<dbReference type="PDBsum" id="5DK4"/>
<dbReference type="PDBsum" id="7CKI"/>
<dbReference type="PDBsum" id="7CMS"/>
<dbReference type="PDBsum" id="7EER"/>
<dbReference type="SMR" id="P00953"/>
<dbReference type="DIP" id="DIP-48697N"/>
<dbReference type="DrugBank" id="DB00150">
    <property type="generic name" value="Tryptophan"/>
</dbReference>
<dbReference type="DrugBank" id="DB04537">
    <property type="generic name" value="Tryptophanamide"/>
</dbReference>
<dbReference type="DrugBank" id="DB01831">
    <property type="generic name" value="Tryptophanyl-5'amp"/>
</dbReference>
<dbReference type="BRENDA" id="6.1.1.2">
    <property type="organism ID" value="623"/>
</dbReference>
<dbReference type="EvolutionaryTrace" id="P00953"/>
<dbReference type="GO" id="GO:0005829">
    <property type="term" value="C:cytosol"/>
    <property type="evidence" value="ECO:0007669"/>
    <property type="project" value="TreeGrafter"/>
</dbReference>
<dbReference type="GO" id="GO:0005524">
    <property type="term" value="F:ATP binding"/>
    <property type="evidence" value="ECO:0007669"/>
    <property type="project" value="UniProtKB-UniRule"/>
</dbReference>
<dbReference type="GO" id="GO:0004830">
    <property type="term" value="F:tryptophan-tRNA ligase activity"/>
    <property type="evidence" value="ECO:0007669"/>
    <property type="project" value="UniProtKB-UniRule"/>
</dbReference>
<dbReference type="GO" id="GO:0006436">
    <property type="term" value="P:tryptophanyl-tRNA aminoacylation"/>
    <property type="evidence" value="ECO:0007669"/>
    <property type="project" value="UniProtKB-UniRule"/>
</dbReference>
<dbReference type="CDD" id="cd00806">
    <property type="entry name" value="TrpRS_core"/>
    <property type="match status" value="1"/>
</dbReference>
<dbReference type="FunFam" id="1.10.240.10:FF:000002">
    <property type="entry name" value="Tryptophan--tRNA ligase"/>
    <property type="match status" value="1"/>
</dbReference>
<dbReference type="Gene3D" id="3.40.50.620">
    <property type="entry name" value="HUPs"/>
    <property type="match status" value="1"/>
</dbReference>
<dbReference type="Gene3D" id="1.10.240.10">
    <property type="entry name" value="Tyrosyl-Transfer RNA Synthetase"/>
    <property type="match status" value="1"/>
</dbReference>
<dbReference type="HAMAP" id="MF_00140_B">
    <property type="entry name" value="Trp_tRNA_synth_B"/>
    <property type="match status" value="1"/>
</dbReference>
<dbReference type="InterPro" id="IPR001412">
    <property type="entry name" value="aa-tRNA-synth_I_CS"/>
</dbReference>
<dbReference type="InterPro" id="IPR002305">
    <property type="entry name" value="aa-tRNA-synth_Ic"/>
</dbReference>
<dbReference type="InterPro" id="IPR014729">
    <property type="entry name" value="Rossmann-like_a/b/a_fold"/>
</dbReference>
<dbReference type="InterPro" id="IPR002306">
    <property type="entry name" value="Trp-tRNA-ligase"/>
</dbReference>
<dbReference type="InterPro" id="IPR024109">
    <property type="entry name" value="Trp-tRNA-ligase_bac-type"/>
</dbReference>
<dbReference type="InterPro" id="IPR050203">
    <property type="entry name" value="Trp-tRNA_synthetase"/>
</dbReference>
<dbReference type="NCBIfam" id="TIGR00233">
    <property type="entry name" value="trpS"/>
    <property type="match status" value="1"/>
</dbReference>
<dbReference type="PANTHER" id="PTHR43766">
    <property type="entry name" value="TRYPTOPHAN--TRNA LIGASE, MITOCHONDRIAL"/>
    <property type="match status" value="1"/>
</dbReference>
<dbReference type="PANTHER" id="PTHR43766:SF1">
    <property type="entry name" value="TRYPTOPHAN--TRNA LIGASE, MITOCHONDRIAL"/>
    <property type="match status" value="1"/>
</dbReference>
<dbReference type="Pfam" id="PF00579">
    <property type="entry name" value="tRNA-synt_1b"/>
    <property type="match status" value="1"/>
</dbReference>
<dbReference type="PRINTS" id="PR01039">
    <property type="entry name" value="TRNASYNTHTRP"/>
</dbReference>
<dbReference type="SUPFAM" id="SSF52374">
    <property type="entry name" value="Nucleotidylyl transferase"/>
    <property type="match status" value="1"/>
</dbReference>
<dbReference type="PROSITE" id="PS00178">
    <property type="entry name" value="AA_TRNA_LIGASE_I"/>
    <property type="match status" value="1"/>
</dbReference>
<organism>
    <name type="scientific">Geobacillus stearothermophilus</name>
    <name type="common">Bacillus stearothermophilus</name>
    <dbReference type="NCBI Taxonomy" id="1422"/>
    <lineage>
        <taxon>Bacteria</taxon>
        <taxon>Bacillati</taxon>
        <taxon>Bacillota</taxon>
        <taxon>Bacilli</taxon>
        <taxon>Bacillales</taxon>
        <taxon>Anoxybacillaceae</taxon>
        <taxon>Geobacillus</taxon>
    </lineage>
</organism>
<sequence length="328" mass="37193">MKTIFSGIQPSGVITIGNYIGALRQFVELQHEYNCYFCIVDQHAITVWQDPHELRQNIRRLAAKYLAVGIDPTQATLFIQSEVPAHAQAAWMLQCIVYIGELERMTQFKEKSAGKEAVSAGLLTYPPLMAADILLYNTDIVPVGEDQKQHIELTRDLAERFNKRYGELFTIPEARIPKVGARIMSLVDPTKKMSKSDPNPKAYITLLDDAKTIEKKIKSAVTDSEGTIRYDKEAKPGISNLLNIYSTLSGQSIEELERQYEGKGYGVFKADLAQVVIETLRPIQERYHHWMESEELDRVLDEGAEKANRVASEMVRKMEQAMGLGRRR</sequence>
<feature type="chain" id="PRO_0000136601" description="Tryptophan--tRNA ligase">
    <location>
        <begin position="1"/>
        <end position="328"/>
    </location>
</feature>
<feature type="short sequence motif" description="'HIGH' region" evidence="1 3">
    <location>
        <begin position="10"/>
        <end position="18"/>
    </location>
</feature>
<feature type="short sequence motif" description="'KMSKS' region" evidence="1 3">
    <location>
        <begin position="192"/>
        <end position="196"/>
    </location>
</feature>
<feature type="binding site" evidence="1 2 4">
    <location>
        <begin position="9"/>
        <end position="11"/>
    </location>
    <ligand>
        <name>ATP</name>
        <dbReference type="ChEBI" id="CHEBI:30616"/>
    </ligand>
</feature>
<feature type="binding site" evidence="1 2 4">
    <location>
        <begin position="17"/>
        <end position="18"/>
    </location>
    <ligand>
        <name>ATP</name>
        <dbReference type="ChEBI" id="CHEBI:30616"/>
    </ligand>
</feature>
<feature type="binding site" evidence="1 2 4">
    <location>
        <position position="132"/>
    </location>
    <ligand>
        <name>L-tryptophan</name>
        <dbReference type="ChEBI" id="CHEBI:57912"/>
    </ligand>
</feature>
<feature type="binding site" evidence="1 2 4">
    <location>
        <begin position="144"/>
        <end position="146"/>
    </location>
    <ligand>
        <name>ATP</name>
        <dbReference type="ChEBI" id="CHEBI:30616"/>
    </ligand>
</feature>
<feature type="binding site" evidence="1 2 4">
    <location>
        <position position="183"/>
    </location>
    <ligand>
        <name>ATP</name>
        <dbReference type="ChEBI" id="CHEBI:30616"/>
    </ligand>
</feature>
<feature type="binding site" evidence="1 2 4">
    <location>
        <begin position="192"/>
        <end position="196"/>
    </location>
    <ligand>
        <name>ATP</name>
        <dbReference type="ChEBI" id="CHEBI:30616"/>
    </ligand>
</feature>
<feature type="strand" evidence="5">
    <location>
        <begin position="3"/>
        <end position="8"/>
    </location>
</feature>
<feature type="strand" evidence="6">
    <location>
        <begin position="11"/>
        <end position="13"/>
    </location>
</feature>
<feature type="helix" evidence="5">
    <location>
        <begin position="16"/>
        <end position="21"/>
    </location>
</feature>
<feature type="helix" evidence="5">
    <location>
        <begin position="23"/>
        <end position="29"/>
    </location>
</feature>
<feature type="turn" evidence="5">
    <location>
        <begin position="30"/>
        <end position="32"/>
    </location>
</feature>
<feature type="strand" evidence="5">
    <location>
        <begin position="33"/>
        <end position="39"/>
    </location>
</feature>
<feature type="helix" evidence="5">
    <location>
        <begin position="41"/>
        <end position="44"/>
    </location>
</feature>
<feature type="helix" evidence="5">
    <location>
        <begin position="51"/>
        <end position="67"/>
    </location>
</feature>
<feature type="turn" evidence="5">
    <location>
        <begin position="72"/>
        <end position="74"/>
    </location>
</feature>
<feature type="strand" evidence="5">
    <location>
        <begin position="75"/>
        <end position="79"/>
    </location>
</feature>
<feature type="helix" evidence="5">
    <location>
        <begin position="80"/>
        <end position="82"/>
    </location>
</feature>
<feature type="helix" evidence="5">
    <location>
        <begin position="85"/>
        <end position="96"/>
    </location>
</feature>
<feature type="helix" evidence="5">
    <location>
        <begin position="99"/>
        <end position="103"/>
    </location>
</feature>
<feature type="helix" evidence="5">
    <location>
        <begin position="106"/>
        <end position="112"/>
    </location>
</feature>
<feature type="helix" evidence="7">
    <location>
        <begin position="113"/>
        <end position="115"/>
    </location>
</feature>
<feature type="helix" evidence="5">
    <location>
        <begin position="120"/>
        <end position="123"/>
    </location>
</feature>
<feature type="helix" evidence="5">
    <location>
        <begin position="125"/>
        <end position="134"/>
    </location>
</feature>
<feature type="turn" evidence="5">
    <location>
        <begin position="135"/>
        <end position="137"/>
    </location>
</feature>
<feature type="strand" evidence="5">
    <location>
        <begin position="139"/>
        <end position="142"/>
    </location>
</feature>
<feature type="helix" evidence="5">
    <location>
        <begin position="145"/>
        <end position="147"/>
    </location>
</feature>
<feature type="helix" evidence="5">
    <location>
        <begin position="148"/>
        <end position="165"/>
    </location>
</feature>
<feature type="strand" evidence="5">
    <location>
        <begin position="173"/>
        <end position="175"/>
    </location>
</feature>
<feature type="strand" evidence="5">
    <location>
        <begin position="178"/>
        <end position="182"/>
    </location>
</feature>
<feature type="helix" evidence="5">
    <location>
        <begin position="200"/>
        <end position="202"/>
    </location>
</feature>
<feature type="helix" evidence="5">
    <location>
        <begin position="210"/>
        <end position="219"/>
    </location>
</feature>
<feature type="turn" evidence="5">
    <location>
        <begin position="232"/>
        <end position="234"/>
    </location>
</feature>
<feature type="helix" evidence="5">
    <location>
        <begin position="236"/>
        <end position="249"/>
    </location>
</feature>
<feature type="helix" evidence="5">
    <location>
        <begin position="253"/>
        <end position="259"/>
    </location>
</feature>
<feature type="turn" evidence="5">
    <location>
        <begin position="260"/>
        <end position="262"/>
    </location>
</feature>
<feature type="helix" evidence="5">
    <location>
        <begin position="265"/>
        <end position="291"/>
    </location>
</feature>
<feature type="helix" evidence="5">
    <location>
        <begin position="295"/>
        <end position="322"/>
    </location>
</feature>
<keyword id="KW-0002">3D-structure</keyword>
<keyword id="KW-0030">Aminoacyl-tRNA synthetase</keyword>
<keyword id="KW-0067">ATP-binding</keyword>
<keyword id="KW-0963">Cytoplasm</keyword>
<keyword id="KW-0903">Direct protein sequencing</keyword>
<keyword id="KW-0436">Ligase</keyword>
<keyword id="KW-0547">Nucleotide-binding</keyword>
<keyword id="KW-0648">Protein biosynthesis</keyword>
<name>SYW_GEOSE</name>
<reference key="1">
    <citation type="journal article" date="1986" name="Gene">
        <title>Cloning and complete nucleotide sequence of the Bacillus stearothermophilus tryptophanyl tRNA synthetase gene.</title>
        <authorList>
            <person name="Barstow D.A."/>
            <person name="Sharman A.F."/>
            <person name="Atkinson T."/>
            <person name="Minton N.P."/>
        </authorList>
    </citation>
    <scope>NUCLEOTIDE SEQUENCE [GENOMIC DNA]</scope>
</reference>
<reference key="2">
    <citation type="journal article" date="1977" name="FEBS Lett.">
        <title>The amino acid sequence of tryptophanyl tRNA synthetase from Bacillus stearothermophilus.</title>
        <authorList>
            <person name="Winter G.P."/>
            <person name="Hartley B.S."/>
        </authorList>
    </citation>
    <scope>PROTEIN SEQUENCE OF 1-327</scope>
</reference>
<reference key="3">
    <citation type="journal article" date="1995" name="Structure">
        <title>Tryptophanyl-tRNA synthetase crystal structure reveals an unexpected homology to tyrosyl-tRNA synthetase.</title>
        <authorList>
            <person name="Doublie S."/>
            <person name="Bricogne G."/>
            <person name="Gilmore C."/>
            <person name="Carter C.W. Jr."/>
        </authorList>
    </citation>
    <scope>X-RAY CRYSTALLOGRAPHY (2.9 ANGSTROMS)</scope>
</reference>
<reference key="4">
    <citation type="journal article" date="2000" name="Protein Sci.">
        <title>2.9-A crystal structure of ligand-free tryptophanyl-tRNA synthetase: domain movements fragment the adenine nucleotide binding site.</title>
        <authorList>
            <person name="Ilyin V.A."/>
            <person name="Temple B."/>
            <person name="Hu M."/>
            <person name="Li G.-P."/>
            <person name="Yin Y."/>
            <person name="Vachette P."/>
            <person name="Carter C.W. Jr."/>
        </authorList>
    </citation>
    <scope>X-RAY CRYSTALLOGRAPHY (2.9 ANGSTROMS)</scope>
</reference>
<reference key="5">
    <citation type="journal article" date="2016" name="J. Biol. Chem.">
        <title>Selective inhibition of bacterial tryptophanyl-tRNA synthetases by Indolmycin is mechanism-based.</title>
        <authorList>
            <person name="Williams T.L."/>
            <person name="Yin Y.W."/>
            <person name="Carter C.W. Jr."/>
        </authorList>
    </citation>
    <scope>X-RAY CRYSTALLOGRAPHY (1.90 ANGSTROMS) IN COMPLEX WITH ATP AND INHIBITOR INDOLMYCIN</scope>
    <scope>FUNCTION</scope>
    <scope>CATALYTIC ACTIVITY</scope>
    <scope>ACTIVITY REGULATION</scope>
    <scope>BIOPHYSICOCHEMICAL PROPERTIES</scope>
</reference>
<proteinExistence type="evidence at protein level"/>
<accession>P00953</accession>
<protein>
    <recommendedName>
        <fullName evidence="1">Tryptophan--tRNA ligase</fullName>
        <ecNumber evidence="1 2">6.1.1.2</ecNumber>
    </recommendedName>
    <alternativeName>
        <fullName evidence="1">Tryptophanyl-tRNA synthetase</fullName>
        <shortName evidence="1">TrpRS</shortName>
    </alternativeName>
</protein>